<proteinExistence type="evidence at transcript level"/>
<dbReference type="EC" id="3.6.1.-"/>
<dbReference type="EMBL" id="AF296837">
    <property type="status" value="NOT_ANNOTATED_CDS"/>
    <property type="molecule type" value="Genomic_DNA"/>
</dbReference>
<dbReference type="EMBL" id="CP002688">
    <property type="protein sequence ID" value="AED92710.1"/>
    <property type="molecule type" value="Genomic_DNA"/>
</dbReference>
<dbReference type="EMBL" id="AY074342">
    <property type="protein sequence ID" value="AAL67038.1"/>
    <property type="molecule type" value="mRNA"/>
</dbReference>
<dbReference type="EMBL" id="AY117160">
    <property type="protein sequence ID" value="AAM51235.1"/>
    <property type="molecule type" value="mRNA"/>
</dbReference>
<dbReference type="RefSeq" id="NP_197447.2">
    <property type="nucleotide sequence ID" value="NM_121951.5"/>
</dbReference>
<dbReference type="SMR" id="Q8VXZ0"/>
<dbReference type="FunCoup" id="Q8VXZ0">
    <property type="interactions" value="1119"/>
</dbReference>
<dbReference type="STRING" id="3702.Q8VXZ0"/>
<dbReference type="iPTMnet" id="Q8VXZ0"/>
<dbReference type="PaxDb" id="3702-AT5G19460.1"/>
<dbReference type="ProteomicsDB" id="250582"/>
<dbReference type="EnsemblPlants" id="AT5G19460.1">
    <property type="protein sequence ID" value="AT5G19460.1"/>
    <property type="gene ID" value="AT5G19460"/>
</dbReference>
<dbReference type="GeneID" id="832066"/>
<dbReference type="Gramene" id="AT5G19460.1">
    <property type="protein sequence ID" value="AT5G19460.1"/>
    <property type="gene ID" value="AT5G19460"/>
</dbReference>
<dbReference type="KEGG" id="ath:AT5G19460"/>
<dbReference type="Araport" id="AT5G19460"/>
<dbReference type="TAIR" id="AT5G19460">
    <property type="gene designation" value="NUDT20"/>
</dbReference>
<dbReference type="eggNOG" id="KOG4313">
    <property type="taxonomic scope" value="Eukaryota"/>
</dbReference>
<dbReference type="HOGENOM" id="CLU_048013_1_3_1"/>
<dbReference type="InParanoid" id="Q8VXZ0"/>
<dbReference type="OMA" id="VPLQTMY"/>
<dbReference type="PhylomeDB" id="Q8VXZ0"/>
<dbReference type="BioCyc" id="ARA:AT5G19460-MONOMER"/>
<dbReference type="PRO" id="PR:Q8VXZ0"/>
<dbReference type="Proteomes" id="UP000006548">
    <property type="component" value="Chromosome 5"/>
</dbReference>
<dbReference type="ExpressionAtlas" id="Q8VXZ0">
    <property type="expression patterns" value="baseline and differential"/>
</dbReference>
<dbReference type="GO" id="GO:0009507">
    <property type="term" value="C:chloroplast"/>
    <property type="evidence" value="ECO:0007005"/>
    <property type="project" value="TAIR"/>
</dbReference>
<dbReference type="GO" id="GO:0016787">
    <property type="term" value="F:hydrolase activity"/>
    <property type="evidence" value="ECO:0007669"/>
    <property type="project" value="UniProtKB-KW"/>
</dbReference>
<dbReference type="GO" id="GO:0046872">
    <property type="term" value="F:metal ion binding"/>
    <property type="evidence" value="ECO:0007669"/>
    <property type="project" value="UniProtKB-KW"/>
</dbReference>
<dbReference type="CDD" id="cd03676">
    <property type="entry name" value="NUDIX_Tnr3_like"/>
    <property type="match status" value="1"/>
</dbReference>
<dbReference type="FunFam" id="3.90.79.10:FF:000019">
    <property type="entry name" value="Thiamin pyrophosphokinase, putative"/>
    <property type="match status" value="1"/>
</dbReference>
<dbReference type="Gene3D" id="3.90.79.10">
    <property type="entry name" value="Nucleoside Triphosphate Pyrophosphohydrolase"/>
    <property type="match status" value="1"/>
</dbReference>
<dbReference type="InterPro" id="IPR031804">
    <property type="entry name" value="DUF4743"/>
</dbReference>
<dbReference type="InterPro" id="IPR015797">
    <property type="entry name" value="NUDIX_hydrolase-like_dom_sf"/>
</dbReference>
<dbReference type="InterPro" id="IPR000086">
    <property type="entry name" value="NUDIX_hydrolase_dom"/>
</dbReference>
<dbReference type="PANTHER" id="PTHR13622">
    <property type="entry name" value="THIAMIN PYROPHOSPHOKINASE"/>
    <property type="match status" value="1"/>
</dbReference>
<dbReference type="PANTHER" id="PTHR13622:SF8">
    <property type="entry name" value="THIAMIN PYROPHOSPHOKINASE 1"/>
    <property type="match status" value="1"/>
</dbReference>
<dbReference type="Pfam" id="PF15916">
    <property type="entry name" value="DUF4743"/>
    <property type="match status" value="1"/>
</dbReference>
<dbReference type="Pfam" id="PF00293">
    <property type="entry name" value="NUDIX"/>
    <property type="match status" value="1"/>
</dbReference>
<dbReference type="SUPFAM" id="SSF55811">
    <property type="entry name" value="Nudix"/>
    <property type="match status" value="1"/>
</dbReference>
<dbReference type="PROSITE" id="PS51462">
    <property type="entry name" value="NUDIX"/>
    <property type="match status" value="1"/>
</dbReference>
<gene>
    <name type="primary">NUDT20</name>
    <name type="synonym">NUDX20</name>
    <name type="ordered locus">At5g19460</name>
    <name type="ORF">F7K24.210</name>
</gene>
<reference key="1">
    <citation type="journal article" date="2000" name="Nature">
        <title>Sequence and analysis of chromosome 5 of the plant Arabidopsis thaliana.</title>
        <authorList>
            <person name="Tabata S."/>
            <person name="Kaneko T."/>
            <person name="Nakamura Y."/>
            <person name="Kotani H."/>
            <person name="Kato T."/>
            <person name="Asamizu E."/>
            <person name="Miyajima N."/>
            <person name="Sasamoto S."/>
            <person name="Kimura T."/>
            <person name="Hosouchi T."/>
            <person name="Kawashima K."/>
            <person name="Kohara M."/>
            <person name="Matsumoto M."/>
            <person name="Matsuno A."/>
            <person name="Muraki A."/>
            <person name="Nakayama S."/>
            <person name="Nakazaki N."/>
            <person name="Naruo K."/>
            <person name="Okumura S."/>
            <person name="Shinpo S."/>
            <person name="Takeuchi C."/>
            <person name="Wada T."/>
            <person name="Watanabe A."/>
            <person name="Yamada M."/>
            <person name="Yasuda M."/>
            <person name="Sato S."/>
            <person name="de la Bastide M."/>
            <person name="Huang E."/>
            <person name="Spiegel L."/>
            <person name="Gnoj L."/>
            <person name="O'Shaughnessy A."/>
            <person name="Preston R."/>
            <person name="Habermann K."/>
            <person name="Murray J."/>
            <person name="Johnson D."/>
            <person name="Rohlfing T."/>
            <person name="Nelson J."/>
            <person name="Stoneking T."/>
            <person name="Pepin K."/>
            <person name="Spieth J."/>
            <person name="Sekhon M."/>
            <person name="Armstrong J."/>
            <person name="Becker M."/>
            <person name="Belter E."/>
            <person name="Cordum H."/>
            <person name="Cordes M."/>
            <person name="Courtney L."/>
            <person name="Courtney W."/>
            <person name="Dante M."/>
            <person name="Du H."/>
            <person name="Edwards J."/>
            <person name="Fryman J."/>
            <person name="Haakensen B."/>
            <person name="Lamar E."/>
            <person name="Latreille P."/>
            <person name="Leonard S."/>
            <person name="Meyer R."/>
            <person name="Mulvaney E."/>
            <person name="Ozersky P."/>
            <person name="Riley A."/>
            <person name="Strowmatt C."/>
            <person name="Wagner-McPherson C."/>
            <person name="Wollam A."/>
            <person name="Yoakum M."/>
            <person name="Bell M."/>
            <person name="Dedhia N."/>
            <person name="Parnell L."/>
            <person name="Shah R."/>
            <person name="Rodriguez M."/>
            <person name="Hoon See L."/>
            <person name="Vil D."/>
            <person name="Baker J."/>
            <person name="Kirchoff K."/>
            <person name="Toth K."/>
            <person name="King L."/>
            <person name="Bahret A."/>
            <person name="Miller B."/>
            <person name="Marra M.A."/>
            <person name="Martienssen R."/>
            <person name="McCombie W.R."/>
            <person name="Wilson R.K."/>
            <person name="Murphy G."/>
            <person name="Bancroft I."/>
            <person name="Volckaert G."/>
            <person name="Wambutt R."/>
            <person name="Duesterhoeft A."/>
            <person name="Stiekema W."/>
            <person name="Pohl T."/>
            <person name="Entian K.-D."/>
            <person name="Terryn N."/>
            <person name="Hartley N."/>
            <person name="Bent E."/>
            <person name="Johnson S."/>
            <person name="Langham S.-A."/>
            <person name="McCullagh B."/>
            <person name="Robben J."/>
            <person name="Grymonprez B."/>
            <person name="Zimmermann W."/>
            <person name="Ramsperger U."/>
            <person name="Wedler H."/>
            <person name="Balke K."/>
            <person name="Wedler E."/>
            <person name="Peters S."/>
            <person name="van Staveren M."/>
            <person name="Dirkse W."/>
            <person name="Mooijman P."/>
            <person name="Klein Lankhorst R."/>
            <person name="Weitzenegger T."/>
            <person name="Bothe G."/>
            <person name="Rose M."/>
            <person name="Hauf J."/>
            <person name="Berneiser S."/>
            <person name="Hempel S."/>
            <person name="Feldpausch M."/>
            <person name="Lamberth S."/>
            <person name="Villarroel R."/>
            <person name="Gielen J."/>
            <person name="Ardiles W."/>
            <person name="Bents O."/>
            <person name="Lemcke K."/>
            <person name="Kolesov G."/>
            <person name="Mayer K.F.X."/>
            <person name="Rudd S."/>
            <person name="Schoof H."/>
            <person name="Schueller C."/>
            <person name="Zaccaria P."/>
            <person name="Mewes H.-W."/>
            <person name="Bevan M."/>
            <person name="Fransz P.F."/>
        </authorList>
    </citation>
    <scope>NUCLEOTIDE SEQUENCE [LARGE SCALE GENOMIC DNA]</scope>
    <source>
        <strain>cv. Columbia</strain>
    </source>
</reference>
<reference key="2">
    <citation type="journal article" date="2017" name="Plant J.">
        <title>Araport11: a complete reannotation of the Arabidopsis thaliana reference genome.</title>
        <authorList>
            <person name="Cheng C.Y."/>
            <person name="Krishnakumar V."/>
            <person name="Chan A.P."/>
            <person name="Thibaud-Nissen F."/>
            <person name="Schobel S."/>
            <person name="Town C.D."/>
        </authorList>
    </citation>
    <scope>GENOME REANNOTATION</scope>
    <source>
        <strain>cv. Columbia</strain>
    </source>
</reference>
<reference key="3">
    <citation type="journal article" date="2003" name="Science">
        <title>Empirical analysis of transcriptional activity in the Arabidopsis genome.</title>
        <authorList>
            <person name="Yamada K."/>
            <person name="Lim J."/>
            <person name="Dale J.M."/>
            <person name="Chen H."/>
            <person name="Shinn P."/>
            <person name="Palm C.J."/>
            <person name="Southwick A.M."/>
            <person name="Wu H.C."/>
            <person name="Kim C.J."/>
            <person name="Nguyen M."/>
            <person name="Pham P.K."/>
            <person name="Cheuk R.F."/>
            <person name="Karlin-Newmann G."/>
            <person name="Liu S.X."/>
            <person name="Lam B."/>
            <person name="Sakano H."/>
            <person name="Wu T."/>
            <person name="Yu G."/>
            <person name="Miranda M."/>
            <person name="Quach H.L."/>
            <person name="Tripp M."/>
            <person name="Chang C.H."/>
            <person name="Lee J.M."/>
            <person name="Toriumi M.J."/>
            <person name="Chan M.M."/>
            <person name="Tang C.C."/>
            <person name="Onodera C.S."/>
            <person name="Deng J.M."/>
            <person name="Akiyama K."/>
            <person name="Ansari Y."/>
            <person name="Arakawa T."/>
            <person name="Banh J."/>
            <person name="Banno F."/>
            <person name="Bowser L."/>
            <person name="Brooks S.Y."/>
            <person name="Carninci P."/>
            <person name="Chao Q."/>
            <person name="Choy N."/>
            <person name="Enju A."/>
            <person name="Goldsmith A.D."/>
            <person name="Gurjal M."/>
            <person name="Hansen N.F."/>
            <person name="Hayashizaki Y."/>
            <person name="Johnson-Hopson C."/>
            <person name="Hsuan V.W."/>
            <person name="Iida K."/>
            <person name="Karnes M."/>
            <person name="Khan S."/>
            <person name="Koesema E."/>
            <person name="Ishida J."/>
            <person name="Jiang P.X."/>
            <person name="Jones T."/>
            <person name="Kawai J."/>
            <person name="Kamiya A."/>
            <person name="Meyers C."/>
            <person name="Nakajima M."/>
            <person name="Narusaka M."/>
            <person name="Seki M."/>
            <person name="Sakurai T."/>
            <person name="Satou M."/>
            <person name="Tamse R."/>
            <person name="Vaysberg M."/>
            <person name="Wallender E.K."/>
            <person name="Wong C."/>
            <person name="Yamamura Y."/>
            <person name="Yuan S."/>
            <person name="Shinozaki K."/>
            <person name="Davis R.W."/>
            <person name="Theologis A."/>
            <person name="Ecker J.R."/>
        </authorList>
    </citation>
    <scope>NUCLEOTIDE SEQUENCE [LARGE SCALE MRNA]</scope>
    <source>
        <strain>cv. Columbia</strain>
    </source>
</reference>
<reference key="4">
    <citation type="journal article" date="2005" name="J. Biol. Chem.">
        <title>Comprehensive analysis of cytosolic nudix hydrolases in Arabidopsis thaliana.</title>
        <authorList>
            <person name="Ogawa T."/>
            <person name="Ueda Y."/>
            <person name="Yoshimura K."/>
            <person name="Shigeoka S."/>
        </authorList>
    </citation>
    <scope>NOMENCLATURE</scope>
</reference>
<reference key="5">
    <citation type="journal article" date="2008" name="Plant Physiol.">
        <title>Molecular characterization of organelle-type Nudix hydrolases in Arabidopsis.</title>
        <authorList>
            <person name="Ogawa T."/>
            <person name="Yoshimura K."/>
            <person name="Miyake H."/>
            <person name="Ishikawa K."/>
            <person name="Ito D."/>
            <person name="Tanabe N."/>
            <person name="Shigeoka S."/>
        </authorList>
    </citation>
    <scope>TISSUE SPECIFICITY</scope>
    <scope>DISRUPTION PHENOTYPE</scope>
</reference>
<organism>
    <name type="scientific">Arabidopsis thaliana</name>
    <name type="common">Mouse-ear cress</name>
    <dbReference type="NCBI Taxonomy" id="3702"/>
    <lineage>
        <taxon>Eukaryota</taxon>
        <taxon>Viridiplantae</taxon>
        <taxon>Streptophyta</taxon>
        <taxon>Embryophyta</taxon>
        <taxon>Tracheophyta</taxon>
        <taxon>Spermatophyta</taxon>
        <taxon>Magnoliopsida</taxon>
        <taxon>eudicotyledons</taxon>
        <taxon>Gunneridae</taxon>
        <taxon>Pentapetalae</taxon>
        <taxon>rosids</taxon>
        <taxon>malvids</taxon>
        <taxon>Brassicales</taxon>
        <taxon>Brassicaceae</taxon>
        <taxon>Camelineae</taxon>
        <taxon>Arabidopsis</taxon>
    </lineage>
</organism>
<comment type="function">
    <text evidence="1">Probably mediates the hydrolysis of some nucleoside diphosphate derivatives.</text>
</comment>
<comment type="cofactor">
    <cofactor evidence="1">
        <name>Mg(2+)</name>
        <dbReference type="ChEBI" id="CHEBI:18420"/>
    </cofactor>
    <cofactor evidence="1">
        <name>Mn(2+)</name>
        <dbReference type="ChEBI" id="CHEBI:29035"/>
    </cofactor>
</comment>
<comment type="subcellular location">
    <subcellularLocation>
        <location evidence="5">Plastid</location>
        <location evidence="5">Chloroplast</location>
    </subcellularLocation>
</comment>
<comment type="tissue specificity">
    <text evidence="4">Expressed in leaves and inflorescences.</text>
</comment>
<comment type="disruption phenotype">
    <text evidence="4">No visible phenotype under normal growth conditions.</text>
</comment>
<comment type="similarity">
    <text evidence="5">Belongs to the Nudix hydrolase family.</text>
</comment>
<evidence type="ECO:0000250" key="1"/>
<evidence type="ECO:0000255" key="2"/>
<evidence type="ECO:0000255" key="3">
    <source>
        <dbReference type="PROSITE-ProRule" id="PRU00794"/>
    </source>
</evidence>
<evidence type="ECO:0000269" key="4">
    <source>
    </source>
</evidence>
<evidence type="ECO:0000305" key="5"/>
<name>NUD20_ARATH</name>
<sequence>MASGFCSLALTVTTSLFSSHAITRRVLPILRWRSSSMSLSPLRHSRALSAATTVPISSSFTWDDVIETGRAEYNSSDLTGFFEKINRCNRGSEKLGEFIPFVIEEQIVGYIHKRFTEYLREFHDIFTFSQNGSCPDRVDGYVTLNLMLQKPEDRTRAVADVIKILGDKGIIPGIRNELYPVKPSFNAPVFFSLERAAAPYFGIKGYGVHMNGYVERDGQKLLWIGKRSLSKSTYPGMLDHLVAGGLPHGISCGGNLVKECEEEAGISRAIADRAIAVGAVSYLDIDQYCFKRDVLFCYDLELPEDFVPKNQDGEVESFKLIPVAQVASVIKKTSFFKANCSLVIIDFLFRHGFIRPESSGYLDLYQRLRNRDCS</sequence>
<protein>
    <recommendedName>
        <fullName>Nudix hydrolase 20, chloroplastic</fullName>
        <shortName>AtNUDT20</shortName>
        <ecNumber>3.6.1.-</ecNumber>
    </recommendedName>
</protein>
<feature type="transit peptide" description="Chloroplast" evidence="2">
    <location>
        <begin position="1"/>
        <end position="49"/>
    </location>
</feature>
<feature type="chain" id="PRO_0000019962" description="Nudix hydrolase 20, chloroplastic">
    <location>
        <begin position="50"/>
        <end position="374"/>
    </location>
</feature>
<feature type="domain" description="Nudix hydrolase" evidence="3">
    <location>
        <begin position="205"/>
        <end position="346"/>
    </location>
</feature>
<feature type="short sequence motif" description="Nudix box">
    <location>
        <begin position="244"/>
        <end position="265"/>
    </location>
</feature>
<feature type="binding site" evidence="1">
    <location>
        <position position="259"/>
    </location>
    <ligand>
        <name>Mg(2+)</name>
        <dbReference type="ChEBI" id="CHEBI:18420"/>
    </ligand>
</feature>
<feature type="binding site" evidence="1">
    <location>
        <position position="263"/>
    </location>
    <ligand>
        <name>Mg(2+)</name>
        <dbReference type="ChEBI" id="CHEBI:18420"/>
    </ligand>
</feature>
<keyword id="KW-0150">Chloroplast</keyword>
<keyword id="KW-0378">Hydrolase</keyword>
<keyword id="KW-0460">Magnesium</keyword>
<keyword id="KW-0464">Manganese</keyword>
<keyword id="KW-0479">Metal-binding</keyword>
<keyword id="KW-0934">Plastid</keyword>
<keyword id="KW-1185">Reference proteome</keyword>
<keyword id="KW-0809">Transit peptide</keyword>
<accession>Q8VXZ0</accession>